<comment type="similarity">
    <text evidence="1">Belongs to the UPF0246 family.</text>
</comment>
<keyword id="KW-1185">Reference proteome</keyword>
<dbReference type="EMBL" id="AM946015">
    <property type="protein sequence ID" value="CAR43747.1"/>
    <property type="molecule type" value="Genomic_DNA"/>
</dbReference>
<dbReference type="SMR" id="B9DW54"/>
<dbReference type="STRING" id="218495.SUB1767"/>
<dbReference type="KEGG" id="sub:SUB1767"/>
<dbReference type="eggNOG" id="COG3022">
    <property type="taxonomic scope" value="Bacteria"/>
</dbReference>
<dbReference type="HOGENOM" id="CLU_061989_2_1_9"/>
<dbReference type="OrthoDB" id="9777133at2"/>
<dbReference type="Proteomes" id="UP000000449">
    <property type="component" value="Chromosome"/>
</dbReference>
<dbReference type="GO" id="GO:0005829">
    <property type="term" value="C:cytosol"/>
    <property type="evidence" value="ECO:0007669"/>
    <property type="project" value="TreeGrafter"/>
</dbReference>
<dbReference type="GO" id="GO:0033194">
    <property type="term" value="P:response to hydroperoxide"/>
    <property type="evidence" value="ECO:0007669"/>
    <property type="project" value="TreeGrafter"/>
</dbReference>
<dbReference type="HAMAP" id="MF_00652">
    <property type="entry name" value="UPF0246"/>
    <property type="match status" value="1"/>
</dbReference>
<dbReference type="InterPro" id="IPR005583">
    <property type="entry name" value="YaaA"/>
</dbReference>
<dbReference type="NCBIfam" id="NF002543">
    <property type="entry name" value="PRK02101.1-4"/>
    <property type="match status" value="1"/>
</dbReference>
<dbReference type="PANTHER" id="PTHR30283:SF4">
    <property type="entry name" value="PEROXIDE STRESS RESISTANCE PROTEIN YAAA"/>
    <property type="match status" value="1"/>
</dbReference>
<dbReference type="PANTHER" id="PTHR30283">
    <property type="entry name" value="PEROXIDE STRESS RESPONSE PROTEIN YAAA"/>
    <property type="match status" value="1"/>
</dbReference>
<dbReference type="Pfam" id="PF03883">
    <property type="entry name" value="H2O2_YaaD"/>
    <property type="match status" value="1"/>
</dbReference>
<organism>
    <name type="scientific">Streptococcus uberis (strain ATCC BAA-854 / 0140J)</name>
    <dbReference type="NCBI Taxonomy" id="218495"/>
    <lineage>
        <taxon>Bacteria</taxon>
        <taxon>Bacillati</taxon>
        <taxon>Bacillota</taxon>
        <taxon>Bacilli</taxon>
        <taxon>Lactobacillales</taxon>
        <taxon>Streptococcaceae</taxon>
        <taxon>Streptococcus</taxon>
    </lineage>
</organism>
<reference key="1">
    <citation type="journal article" date="2009" name="BMC Genomics">
        <title>Evidence for niche adaptation in the genome of the bovine pathogen Streptococcus uberis.</title>
        <authorList>
            <person name="Ward P.N."/>
            <person name="Holden M.T.G."/>
            <person name="Leigh J.A."/>
            <person name="Lennard N."/>
            <person name="Bignell A."/>
            <person name="Barron A."/>
            <person name="Clark L."/>
            <person name="Quail M.A."/>
            <person name="Woodward J."/>
            <person name="Barrell B.G."/>
            <person name="Egan S.A."/>
            <person name="Field T.R."/>
            <person name="Maskell D."/>
            <person name="Kehoe M."/>
            <person name="Dowson C.G."/>
            <person name="Chanter N."/>
            <person name="Whatmore A.M."/>
            <person name="Bentley S.D."/>
            <person name="Parkhill J."/>
        </authorList>
    </citation>
    <scope>NUCLEOTIDE SEQUENCE [LARGE SCALE GENOMIC DNA]</scope>
    <source>
        <strain>ATCC BAA-854 / 0140J</strain>
    </source>
</reference>
<feature type="chain" id="PRO_1000200432" description="UPF0246 protein SUB1767">
    <location>
        <begin position="1"/>
        <end position="243"/>
    </location>
</feature>
<name>Y1767_STRU0</name>
<evidence type="ECO:0000255" key="1">
    <source>
        <dbReference type="HAMAP-Rule" id="MF_00652"/>
    </source>
</evidence>
<protein>
    <recommendedName>
        <fullName evidence="1">UPF0246 protein SUB1767</fullName>
    </recommendedName>
</protein>
<proteinExistence type="inferred from homology"/>
<accession>B9DW54</accession>
<sequence>MLIYLIPTAKEMSQNHTRFPATFPKKSYPILDVLANLSVKDLSKAYRISEDASQKEWLRIQALYNHTAPTYPAYKLFNGLMYRYLKRDSLSPKEEDYLKNHVYITSALYGIIPASFPIAEHRLDFQTKIKIGQQSLKHFWREDYNQFIDANQTYVSLLSSEFEDVFSTDQRQMWISTQFLEEKNGLLKSHSTISKKARGAFLTACIAKQCQSISDLKTLDFIGFSFSPELSTNHKFVYIKKEA</sequence>
<gene>
    <name type="ordered locus">SUB1767</name>
</gene>